<organism>
    <name type="scientific">Aeromonas hydrophila subsp. hydrophila (strain ATCC 7966 / DSM 30187 / BCRC 13018 / CCUG 14551 / JCM 1027 / KCTC 2358 / NCIMB 9240 / NCTC 8049)</name>
    <dbReference type="NCBI Taxonomy" id="380703"/>
    <lineage>
        <taxon>Bacteria</taxon>
        <taxon>Pseudomonadati</taxon>
        <taxon>Pseudomonadota</taxon>
        <taxon>Gammaproteobacteria</taxon>
        <taxon>Aeromonadales</taxon>
        <taxon>Aeromonadaceae</taxon>
        <taxon>Aeromonas</taxon>
    </lineage>
</organism>
<evidence type="ECO:0000255" key="1">
    <source>
        <dbReference type="HAMAP-Rule" id="MF_01576"/>
    </source>
</evidence>
<gene>
    <name evidence="1" type="primary">folD</name>
    <name type="ordered locus">AHA_1854</name>
</gene>
<protein>
    <recommendedName>
        <fullName evidence="1">Bifunctional protein FolD</fullName>
    </recommendedName>
    <domain>
        <recommendedName>
            <fullName evidence="1">Methylenetetrahydrofolate dehydrogenase</fullName>
            <ecNumber evidence="1">1.5.1.5</ecNumber>
        </recommendedName>
    </domain>
    <domain>
        <recommendedName>
            <fullName evidence="1">Methenyltetrahydrofolate cyclohydrolase</fullName>
            <ecNumber evidence="1">3.5.4.9</ecNumber>
        </recommendedName>
    </domain>
</protein>
<name>FOLD_AERHH</name>
<feature type="chain" id="PRO_0000305788" description="Bifunctional protein FolD">
    <location>
        <begin position="1"/>
        <end position="287"/>
    </location>
</feature>
<feature type="binding site" evidence="1">
    <location>
        <begin position="166"/>
        <end position="168"/>
    </location>
    <ligand>
        <name>NADP(+)</name>
        <dbReference type="ChEBI" id="CHEBI:58349"/>
    </ligand>
</feature>
<feature type="binding site" evidence="1">
    <location>
        <position position="232"/>
    </location>
    <ligand>
        <name>NADP(+)</name>
        <dbReference type="ChEBI" id="CHEBI:58349"/>
    </ligand>
</feature>
<dbReference type="EC" id="1.5.1.5" evidence="1"/>
<dbReference type="EC" id="3.5.4.9" evidence="1"/>
<dbReference type="EMBL" id="CP000462">
    <property type="protein sequence ID" value="ABK39122.1"/>
    <property type="molecule type" value="Genomic_DNA"/>
</dbReference>
<dbReference type="RefSeq" id="WP_011705731.1">
    <property type="nucleotide sequence ID" value="NC_008570.1"/>
</dbReference>
<dbReference type="RefSeq" id="YP_856385.1">
    <property type="nucleotide sequence ID" value="NC_008570.1"/>
</dbReference>
<dbReference type="SMR" id="A0KJD4"/>
<dbReference type="STRING" id="380703.AHA_1854"/>
<dbReference type="EnsemblBacteria" id="ABK39122">
    <property type="protein sequence ID" value="ABK39122"/>
    <property type="gene ID" value="AHA_1854"/>
</dbReference>
<dbReference type="GeneID" id="4489208"/>
<dbReference type="KEGG" id="aha:AHA_1854"/>
<dbReference type="PATRIC" id="fig|380703.7.peg.1864"/>
<dbReference type="eggNOG" id="COG0190">
    <property type="taxonomic scope" value="Bacteria"/>
</dbReference>
<dbReference type="HOGENOM" id="CLU_034045_2_1_6"/>
<dbReference type="OrthoDB" id="9803580at2"/>
<dbReference type="UniPathway" id="UPA00193"/>
<dbReference type="Proteomes" id="UP000000756">
    <property type="component" value="Chromosome"/>
</dbReference>
<dbReference type="GO" id="GO:0005829">
    <property type="term" value="C:cytosol"/>
    <property type="evidence" value="ECO:0007669"/>
    <property type="project" value="TreeGrafter"/>
</dbReference>
<dbReference type="GO" id="GO:0004477">
    <property type="term" value="F:methenyltetrahydrofolate cyclohydrolase activity"/>
    <property type="evidence" value="ECO:0007669"/>
    <property type="project" value="UniProtKB-UniRule"/>
</dbReference>
<dbReference type="GO" id="GO:0004488">
    <property type="term" value="F:methylenetetrahydrofolate dehydrogenase (NADP+) activity"/>
    <property type="evidence" value="ECO:0007669"/>
    <property type="project" value="UniProtKB-UniRule"/>
</dbReference>
<dbReference type="GO" id="GO:0000105">
    <property type="term" value="P:L-histidine biosynthetic process"/>
    <property type="evidence" value="ECO:0007669"/>
    <property type="project" value="UniProtKB-KW"/>
</dbReference>
<dbReference type="GO" id="GO:0009086">
    <property type="term" value="P:methionine biosynthetic process"/>
    <property type="evidence" value="ECO:0007669"/>
    <property type="project" value="UniProtKB-KW"/>
</dbReference>
<dbReference type="GO" id="GO:0006164">
    <property type="term" value="P:purine nucleotide biosynthetic process"/>
    <property type="evidence" value="ECO:0007669"/>
    <property type="project" value="UniProtKB-KW"/>
</dbReference>
<dbReference type="GO" id="GO:0035999">
    <property type="term" value="P:tetrahydrofolate interconversion"/>
    <property type="evidence" value="ECO:0007669"/>
    <property type="project" value="UniProtKB-UniRule"/>
</dbReference>
<dbReference type="CDD" id="cd01080">
    <property type="entry name" value="NAD_bind_m-THF_DH_Cyclohyd"/>
    <property type="match status" value="1"/>
</dbReference>
<dbReference type="FunFam" id="3.40.50.10860:FF:000001">
    <property type="entry name" value="Bifunctional protein FolD"/>
    <property type="match status" value="1"/>
</dbReference>
<dbReference type="FunFam" id="3.40.50.720:FF:000006">
    <property type="entry name" value="Bifunctional protein FolD"/>
    <property type="match status" value="1"/>
</dbReference>
<dbReference type="Gene3D" id="3.40.50.10860">
    <property type="entry name" value="Leucine Dehydrogenase, chain A, domain 1"/>
    <property type="match status" value="1"/>
</dbReference>
<dbReference type="Gene3D" id="3.40.50.720">
    <property type="entry name" value="NAD(P)-binding Rossmann-like Domain"/>
    <property type="match status" value="1"/>
</dbReference>
<dbReference type="HAMAP" id="MF_01576">
    <property type="entry name" value="THF_DHG_CYH"/>
    <property type="match status" value="1"/>
</dbReference>
<dbReference type="InterPro" id="IPR046346">
    <property type="entry name" value="Aminoacid_DH-like_N_sf"/>
</dbReference>
<dbReference type="InterPro" id="IPR036291">
    <property type="entry name" value="NAD(P)-bd_dom_sf"/>
</dbReference>
<dbReference type="InterPro" id="IPR000672">
    <property type="entry name" value="THF_DH/CycHdrlase"/>
</dbReference>
<dbReference type="InterPro" id="IPR020630">
    <property type="entry name" value="THF_DH/CycHdrlase_cat_dom"/>
</dbReference>
<dbReference type="InterPro" id="IPR020867">
    <property type="entry name" value="THF_DH/CycHdrlase_CS"/>
</dbReference>
<dbReference type="InterPro" id="IPR020631">
    <property type="entry name" value="THF_DH/CycHdrlase_NAD-bd_dom"/>
</dbReference>
<dbReference type="NCBIfam" id="NF008058">
    <property type="entry name" value="PRK10792.1"/>
    <property type="match status" value="1"/>
</dbReference>
<dbReference type="NCBIfam" id="NF010783">
    <property type="entry name" value="PRK14186.1"/>
    <property type="match status" value="1"/>
</dbReference>
<dbReference type="PANTHER" id="PTHR48099:SF5">
    <property type="entry name" value="C-1-TETRAHYDROFOLATE SYNTHASE, CYTOPLASMIC"/>
    <property type="match status" value="1"/>
</dbReference>
<dbReference type="PANTHER" id="PTHR48099">
    <property type="entry name" value="C-1-TETRAHYDROFOLATE SYNTHASE, CYTOPLASMIC-RELATED"/>
    <property type="match status" value="1"/>
</dbReference>
<dbReference type="Pfam" id="PF00763">
    <property type="entry name" value="THF_DHG_CYH"/>
    <property type="match status" value="1"/>
</dbReference>
<dbReference type="Pfam" id="PF02882">
    <property type="entry name" value="THF_DHG_CYH_C"/>
    <property type="match status" value="1"/>
</dbReference>
<dbReference type="PRINTS" id="PR00085">
    <property type="entry name" value="THFDHDRGNASE"/>
</dbReference>
<dbReference type="SUPFAM" id="SSF53223">
    <property type="entry name" value="Aminoacid dehydrogenase-like, N-terminal domain"/>
    <property type="match status" value="1"/>
</dbReference>
<dbReference type="SUPFAM" id="SSF51735">
    <property type="entry name" value="NAD(P)-binding Rossmann-fold domains"/>
    <property type="match status" value="1"/>
</dbReference>
<dbReference type="PROSITE" id="PS00766">
    <property type="entry name" value="THF_DHG_CYH_1"/>
    <property type="match status" value="1"/>
</dbReference>
<dbReference type="PROSITE" id="PS00767">
    <property type="entry name" value="THF_DHG_CYH_2"/>
    <property type="match status" value="1"/>
</dbReference>
<proteinExistence type="inferred from homology"/>
<reference key="1">
    <citation type="journal article" date="2006" name="J. Bacteriol.">
        <title>Genome sequence of Aeromonas hydrophila ATCC 7966T: jack of all trades.</title>
        <authorList>
            <person name="Seshadri R."/>
            <person name="Joseph S.W."/>
            <person name="Chopra A.K."/>
            <person name="Sha J."/>
            <person name="Shaw J."/>
            <person name="Graf J."/>
            <person name="Haft D.H."/>
            <person name="Wu M."/>
            <person name="Ren Q."/>
            <person name="Rosovitz M.J."/>
            <person name="Madupu R."/>
            <person name="Tallon L."/>
            <person name="Kim M."/>
            <person name="Jin S."/>
            <person name="Vuong H."/>
            <person name="Stine O.C."/>
            <person name="Ali A."/>
            <person name="Horneman A.J."/>
            <person name="Heidelberg J.F."/>
        </authorList>
    </citation>
    <scope>NUCLEOTIDE SEQUENCE [LARGE SCALE GENOMIC DNA]</scope>
    <source>
        <strain>ATCC 7966 / DSM 30187 / BCRC 13018 / CCUG 14551 / JCM 1027 / KCTC 2358 / NCIMB 9240 / NCTC 8049</strain>
    </source>
</reference>
<keyword id="KW-0028">Amino-acid biosynthesis</keyword>
<keyword id="KW-0368">Histidine biosynthesis</keyword>
<keyword id="KW-0378">Hydrolase</keyword>
<keyword id="KW-0486">Methionine biosynthesis</keyword>
<keyword id="KW-0511">Multifunctional enzyme</keyword>
<keyword id="KW-0521">NADP</keyword>
<keyword id="KW-0554">One-carbon metabolism</keyword>
<keyword id="KW-0560">Oxidoreductase</keyword>
<keyword id="KW-0658">Purine biosynthesis</keyword>
<keyword id="KW-1185">Reference proteome</keyword>
<comment type="function">
    <text evidence="1">Catalyzes the oxidation of 5,10-methylenetetrahydrofolate to 5,10-methenyltetrahydrofolate and then the hydrolysis of 5,10-methenyltetrahydrofolate to 10-formyltetrahydrofolate.</text>
</comment>
<comment type="catalytic activity">
    <reaction evidence="1">
        <text>(6R)-5,10-methylene-5,6,7,8-tetrahydrofolate + NADP(+) = (6R)-5,10-methenyltetrahydrofolate + NADPH</text>
        <dbReference type="Rhea" id="RHEA:22812"/>
        <dbReference type="ChEBI" id="CHEBI:15636"/>
        <dbReference type="ChEBI" id="CHEBI:57455"/>
        <dbReference type="ChEBI" id="CHEBI:57783"/>
        <dbReference type="ChEBI" id="CHEBI:58349"/>
        <dbReference type="EC" id="1.5.1.5"/>
    </reaction>
</comment>
<comment type="catalytic activity">
    <reaction evidence="1">
        <text>(6R)-5,10-methenyltetrahydrofolate + H2O = (6R)-10-formyltetrahydrofolate + H(+)</text>
        <dbReference type="Rhea" id="RHEA:23700"/>
        <dbReference type="ChEBI" id="CHEBI:15377"/>
        <dbReference type="ChEBI" id="CHEBI:15378"/>
        <dbReference type="ChEBI" id="CHEBI:57455"/>
        <dbReference type="ChEBI" id="CHEBI:195366"/>
        <dbReference type="EC" id="3.5.4.9"/>
    </reaction>
</comment>
<comment type="pathway">
    <text evidence="1">One-carbon metabolism; tetrahydrofolate interconversion.</text>
</comment>
<comment type="subunit">
    <text evidence="1">Homodimer.</text>
</comment>
<comment type="similarity">
    <text evidence="1">Belongs to the tetrahydrofolate dehydrogenase/cyclohydrolase family.</text>
</comment>
<accession>A0KJD4</accession>
<sequence>MSAKIIDGKQVAQTIRNQVAAQVQQRLAQGKRAPGLAVILVGVDPASQVYVGSKRRACEEVGFISRSYDLDATASQEELLALIDKLNEDADVDGILVQLPLPAHCDTTQVLERIRPDKDVDGFHPYNVGRLAQRIPALRPCTPKGIMTLIEATGVKTHGLHAVVVGASNIVGRPMTLELLLAGCTTTTCHRFTQDLEDQVRRADLLVVAVGKPNFIPGEWIKPGALVIDVGINRLADGSLVGDVEFETARNHASFITPVPGGVGPMTVASLMENTLSACQDYHDNAQ</sequence>